<gene>
    <name evidence="1" type="primary">rplJ</name>
    <name type="ordered locus">Ping_3448</name>
</gene>
<dbReference type="EMBL" id="CP000510">
    <property type="protein sequence ID" value="ABM05132.1"/>
    <property type="molecule type" value="Genomic_DNA"/>
</dbReference>
<dbReference type="RefSeq" id="WP_011771684.1">
    <property type="nucleotide sequence ID" value="NC_008709.1"/>
</dbReference>
<dbReference type="STRING" id="357804.Ping_3448"/>
<dbReference type="KEGG" id="pin:Ping_3448"/>
<dbReference type="eggNOG" id="COG0244">
    <property type="taxonomic scope" value="Bacteria"/>
</dbReference>
<dbReference type="HOGENOM" id="CLU_092227_0_2_6"/>
<dbReference type="OrthoDB" id="9808307at2"/>
<dbReference type="Proteomes" id="UP000000639">
    <property type="component" value="Chromosome"/>
</dbReference>
<dbReference type="GO" id="GO:0015934">
    <property type="term" value="C:large ribosomal subunit"/>
    <property type="evidence" value="ECO:0007669"/>
    <property type="project" value="InterPro"/>
</dbReference>
<dbReference type="GO" id="GO:0070180">
    <property type="term" value="F:large ribosomal subunit rRNA binding"/>
    <property type="evidence" value="ECO:0007669"/>
    <property type="project" value="UniProtKB-UniRule"/>
</dbReference>
<dbReference type="GO" id="GO:0003735">
    <property type="term" value="F:structural constituent of ribosome"/>
    <property type="evidence" value="ECO:0007669"/>
    <property type="project" value="InterPro"/>
</dbReference>
<dbReference type="GO" id="GO:0006412">
    <property type="term" value="P:translation"/>
    <property type="evidence" value="ECO:0007669"/>
    <property type="project" value="UniProtKB-UniRule"/>
</dbReference>
<dbReference type="CDD" id="cd05797">
    <property type="entry name" value="Ribosomal_L10"/>
    <property type="match status" value="1"/>
</dbReference>
<dbReference type="FunFam" id="3.30.70.1730:FF:000001">
    <property type="entry name" value="50S ribosomal protein L10"/>
    <property type="match status" value="1"/>
</dbReference>
<dbReference type="Gene3D" id="3.30.70.1730">
    <property type="match status" value="1"/>
</dbReference>
<dbReference type="Gene3D" id="6.10.250.2350">
    <property type="match status" value="1"/>
</dbReference>
<dbReference type="HAMAP" id="MF_00362">
    <property type="entry name" value="Ribosomal_uL10"/>
    <property type="match status" value="1"/>
</dbReference>
<dbReference type="InterPro" id="IPR001790">
    <property type="entry name" value="Ribosomal_uL10"/>
</dbReference>
<dbReference type="InterPro" id="IPR043141">
    <property type="entry name" value="Ribosomal_uL10-like_sf"/>
</dbReference>
<dbReference type="InterPro" id="IPR022973">
    <property type="entry name" value="Ribosomal_uL10_bac"/>
</dbReference>
<dbReference type="InterPro" id="IPR047865">
    <property type="entry name" value="Ribosomal_uL10_bac_type"/>
</dbReference>
<dbReference type="InterPro" id="IPR002363">
    <property type="entry name" value="Ribosomal_uL10_CS_bac"/>
</dbReference>
<dbReference type="NCBIfam" id="NF000955">
    <property type="entry name" value="PRK00099.1-1"/>
    <property type="match status" value="1"/>
</dbReference>
<dbReference type="PANTHER" id="PTHR11560">
    <property type="entry name" value="39S RIBOSOMAL PROTEIN L10, MITOCHONDRIAL"/>
    <property type="match status" value="1"/>
</dbReference>
<dbReference type="Pfam" id="PF00466">
    <property type="entry name" value="Ribosomal_L10"/>
    <property type="match status" value="1"/>
</dbReference>
<dbReference type="SUPFAM" id="SSF160369">
    <property type="entry name" value="Ribosomal protein L10-like"/>
    <property type="match status" value="1"/>
</dbReference>
<dbReference type="PROSITE" id="PS01109">
    <property type="entry name" value="RIBOSOMAL_L10"/>
    <property type="match status" value="1"/>
</dbReference>
<feature type="chain" id="PRO_1000005567" description="Large ribosomal subunit protein uL10">
    <location>
        <begin position="1"/>
        <end position="167"/>
    </location>
</feature>
<comment type="function">
    <text evidence="1">Forms part of the ribosomal stalk, playing a central role in the interaction of the ribosome with GTP-bound translation factors.</text>
</comment>
<comment type="subunit">
    <text evidence="1">Part of the ribosomal stalk of the 50S ribosomal subunit. The N-terminus interacts with L11 and the large rRNA to form the base of the stalk. The C-terminus forms an elongated spine to which L12 dimers bind in a sequential fashion forming a multimeric L10(L12)X complex.</text>
</comment>
<comment type="similarity">
    <text evidence="1">Belongs to the universal ribosomal protein uL10 family.</text>
</comment>
<keyword id="KW-1185">Reference proteome</keyword>
<keyword id="KW-0687">Ribonucleoprotein</keyword>
<keyword id="KW-0689">Ribosomal protein</keyword>
<keyword id="KW-0694">RNA-binding</keyword>
<keyword id="KW-0699">rRNA-binding</keyword>
<reference key="1">
    <citation type="journal article" date="2008" name="BMC Genomics">
        <title>Genomics of an extreme psychrophile, Psychromonas ingrahamii.</title>
        <authorList>
            <person name="Riley M."/>
            <person name="Staley J.T."/>
            <person name="Danchin A."/>
            <person name="Wang T.Z."/>
            <person name="Brettin T.S."/>
            <person name="Hauser L.J."/>
            <person name="Land M.L."/>
            <person name="Thompson L.S."/>
        </authorList>
    </citation>
    <scope>NUCLEOTIDE SEQUENCE [LARGE SCALE GENOMIC DNA]</scope>
    <source>
        <strain>DSM 17664 / CCUG 51855 / 37</strain>
    </source>
</reference>
<name>RL10_PSYIN</name>
<proteinExistence type="inferred from homology"/>
<sequence length="167" mass="17783">MALGLEDKKAIVAEVNEAAKIALSAVVANSRGVTVGKMNALRAQARAEGVNLRLVRNTLARRALEGTDFACLADLFIGPTILAFSNEHPGAAARLLKDFAKANDQFEIKGLAFEGEFIEAAQLDRLATLPTYDEAIAQLMATMKEAAAGKLVRTLAAIRDQKEESAA</sequence>
<evidence type="ECO:0000255" key="1">
    <source>
        <dbReference type="HAMAP-Rule" id="MF_00362"/>
    </source>
</evidence>
<evidence type="ECO:0000305" key="2"/>
<organism>
    <name type="scientific">Psychromonas ingrahamii (strain DSM 17664 / CCUG 51855 / 37)</name>
    <dbReference type="NCBI Taxonomy" id="357804"/>
    <lineage>
        <taxon>Bacteria</taxon>
        <taxon>Pseudomonadati</taxon>
        <taxon>Pseudomonadota</taxon>
        <taxon>Gammaproteobacteria</taxon>
        <taxon>Alteromonadales</taxon>
        <taxon>Psychromonadaceae</taxon>
        <taxon>Psychromonas</taxon>
    </lineage>
</organism>
<protein>
    <recommendedName>
        <fullName evidence="1">Large ribosomal subunit protein uL10</fullName>
    </recommendedName>
    <alternativeName>
        <fullName evidence="2">50S ribosomal protein L10</fullName>
    </alternativeName>
</protein>
<accession>A1T067</accession>